<evidence type="ECO:0000250" key="1"/>
<evidence type="ECO:0000269" key="2">
    <source>
    </source>
</evidence>
<evidence type="ECO:0000269" key="3">
    <source>
    </source>
</evidence>
<evidence type="ECO:0000305" key="4"/>
<protein>
    <recommendedName>
        <fullName>Transcription factor E</fullName>
        <shortName>TFE</shortName>
    </recommendedName>
    <alternativeName>
        <fullName>TFIIE subunit alpha homolog</fullName>
    </alternativeName>
    <alternativeName>
        <fullName>Transcription initiation factor TFIIE</fullName>
    </alternativeName>
</protein>
<accession>Q58187</accession>
<organism>
    <name type="scientific">Methanocaldococcus jannaschii (strain ATCC 43067 / DSM 2661 / JAL-1 / JCM 10045 / NBRC 100440)</name>
    <name type="common">Methanococcus jannaschii</name>
    <dbReference type="NCBI Taxonomy" id="243232"/>
    <lineage>
        <taxon>Archaea</taxon>
        <taxon>Methanobacteriati</taxon>
        <taxon>Methanobacteriota</taxon>
        <taxon>Methanomada group</taxon>
        <taxon>Methanococci</taxon>
        <taxon>Methanococcales</taxon>
        <taxon>Methanocaldococcaceae</taxon>
        <taxon>Methanocaldococcus</taxon>
    </lineage>
</organism>
<keyword id="KW-0238">DNA-binding</keyword>
<keyword id="KW-1185">Reference proteome</keyword>
<keyword id="KW-0804">Transcription</keyword>
<keyword id="KW-0805">Transcription regulation</keyword>
<sequence length="173" mass="20667">MLNDPLVQEVLFNIFEGDEKGFEVIDVLLEKGETTEEEIAKELGVKLNVVRKLLYKLYDARLVDYKRWKDEDTNWYSYTWLPTLEKLPYVVKKKINELIKDLEKKLEFEKNNMFFFCPNCNVRFTFEEAMDYGFSCPGCGNMLQEFDNSELIKDLEEQIKFLKEELKNNPFLK</sequence>
<dbReference type="EMBL" id="L77117">
    <property type="protein sequence ID" value="AAB98767.1"/>
    <property type="status" value="ALT_INIT"/>
    <property type="molecule type" value="Genomic_DNA"/>
</dbReference>
<dbReference type="SMR" id="Q58187"/>
<dbReference type="FunCoup" id="Q58187">
    <property type="interactions" value="7"/>
</dbReference>
<dbReference type="STRING" id="243232.MJ_0777"/>
<dbReference type="PaxDb" id="243232-MJ_0777"/>
<dbReference type="EnsemblBacteria" id="AAB98767">
    <property type="protein sequence ID" value="AAB98767"/>
    <property type="gene ID" value="MJ_0777"/>
</dbReference>
<dbReference type="KEGG" id="mja:MJ_0777"/>
<dbReference type="eggNOG" id="arCOG04270">
    <property type="taxonomic scope" value="Archaea"/>
</dbReference>
<dbReference type="HOGENOM" id="CLU_100097_0_0_2"/>
<dbReference type="InParanoid" id="Q58187"/>
<dbReference type="PhylomeDB" id="Q58187"/>
<dbReference type="Proteomes" id="UP000000805">
    <property type="component" value="Chromosome"/>
</dbReference>
<dbReference type="GO" id="GO:0003677">
    <property type="term" value="F:DNA binding"/>
    <property type="evidence" value="ECO:0007669"/>
    <property type="project" value="UniProtKB-KW"/>
</dbReference>
<dbReference type="GO" id="GO:0006355">
    <property type="term" value="P:regulation of DNA-templated transcription"/>
    <property type="evidence" value="ECO:0007669"/>
    <property type="project" value="InterPro"/>
</dbReference>
<dbReference type="GO" id="GO:0006367">
    <property type="term" value="P:transcription initiation at RNA polymerase II promoter"/>
    <property type="evidence" value="ECO:0007669"/>
    <property type="project" value="InterPro"/>
</dbReference>
<dbReference type="Gene3D" id="1.10.10.10">
    <property type="entry name" value="Winged helix-like DNA-binding domain superfamily/Winged helix DNA-binding domain"/>
    <property type="match status" value="1"/>
</dbReference>
<dbReference type="HAMAP" id="MF_01909">
    <property type="entry name" value="TFE_arch"/>
    <property type="match status" value="1"/>
</dbReference>
<dbReference type="InterPro" id="IPR016481">
    <property type="entry name" value="TF_E_archaea"/>
</dbReference>
<dbReference type="InterPro" id="IPR039997">
    <property type="entry name" value="TFE"/>
</dbReference>
<dbReference type="InterPro" id="IPR017919">
    <property type="entry name" value="TFIIE/TFIIEa_HTH"/>
</dbReference>
<dbReference type="InterPro" id="IPR002853">
    <property type="entry name" value="TFIIE_asu"/>
</dbReference>
<dbReference type="InterPro" id="IPR024550">
    <property type="entry name" value="TFIIEa/SarR/Rpc3_HTH_dom"/>
</dbReference>
<dbReference type="InterPro" id="IPR036388">
    <property type="entry name" value="WH-like_DNA-bd_sf"/>
</dbReference>
<dbReference type="InterPro" id="IPR036390">
    <property type="entry name" value="WH_DNA-bd_sf"/>
</dbReference>
<dbReference type="InterPro" id="IPR013137">
    <property type="entry name" value="Znf_TFIIB"/>
</dbReference>
<dbReference type="NCBIfam" id="NF004910">
    <property type="entry name" value="PRK06266.1"/>
    <property type="match status" value="1"/>
</dbReference>
<dbReference type="NCBIfam" id="TIGR00373">
    <property type="entry name" value="transcription factor E"/>
    <property type="match status" value="1"/>
</dbReference>
<dbReference type="PANTHER" id="PTHR13097:SF7">
    <property type="entry name" value="GENERAL TRANSCRIPTION FACTOR IIE SUBUNIT 1"/>
    <property type="match status" value="1"/>
</dbReference>
<dbReference type="PANTHER" id="PTHR13097">
    <property type="entry name" value="TRANSCRIPTION INITIATION FACTOR IIE, ALPHA SUBUNIT"/>
    <property type="match status" value="1"/>
</dbReference>
<dbReference type="Pfam" id="PF02002">
    <property type="entry name" value="TFIIE_alpha"/>
    <property type="match status" value="1"/>
</dbReference>
<dbReference type="Pfam" id="PF08271">
    <property type="entry name" value="Zn_Ribbon_TF"/>
    <property type="match status" value="1"/>
</dbReference>
<dbReference type="PIRSF" id="PIRSF006373">
    <property type="entry name" value="TF_E_archaea"/>
    <property type="match status" value="1"/>
</dbReference>
<dbReference type="SMART" id="SM00531">
    <property type="entry name" value="TFIIE"/>
    <property type="match status" value="1"/>
</dbReference>
<dbReference type="SUPFAM" id="SSF46785">
    <property type="entry name" value="Winged helix' DNA-binding domain"/>
    <property type="match status" value="1"/>
</dbReference>
<dbReference type="PROSITE" id="PS51344">
    <property type="entry name" value="HTH_TFE_IIE"/>
    <property type="match status" value="1"/>
</dbReference>
<name>TFE_METJA</name>
<feature type="chain" id="PRO_0000107028" description="Transcription factor E">
    <location>
        <begin position="1"/>
        <end position="173"/>
    </location>
</feature>
<feature type="domain" description="HTH TFE/IIEalpha-type">
    <location>
        <begin position="3"/>
        <end position="88"/>
    </location>
</feature>
<reference key="1">
    <citation type="journal article" date="1996" name="Science">
        <title>Complete genome sequence of the methanogenic archaeon, Methanococcus jannaschii.</title>
        <authorList>
            <person name="Bult C.J."/>
            <person name="White O."/>
            <person name="Olsen G.J."/>
            <person name="Zhou L."/>
            <person name="Fleischmann R.D."/>
            <person name="Sutton G.G."/>
            <person name="Blake J.A."/>
            <person name="FitzGerald L.M."/>
            <person name="Clayton R.A."/>
            <person name="Gocayne J.D."/>
            <person name="Kerlavage A.R."/>
            <person name="Dougherty B.A."/>
            <person name="Tomb J.-F."/>
            <person name="Adams M.D."/>
            <person name="Reich C.I."/>
            <person name="Overbeek R."/>
            <person name="Kirkness E.F."/>
            <person name="Weinstock K.G."/>
            <person name="Merrick J.M."/>
            <person name="Glodek A."/>
            <person name="Scott J.L."/>
            <person name="Geoghagen N.S.M."/>
            <person name="Weidman J.F."/>
            <person name="Fuhrmann J.L."/>
            <person name="Nguyen D."/>
            <person name="Utterback T.R."/>
            <person name="Kelley J.M."/>
            <person name="Peterson J.D."/>
            <person name="Sadow P.W."/>
            <person name="Hanna M.C."/>
            <person name="Cotton M.D."/>
            <person name="Roberts K.M."/>
            <person name="Hurst M.A."/>
            <person name="Kaine B.P."/>
            <person name="Borodovsky M."/>
            <person name="Klenk H.-P."/>
            <person name="Fraser C.M."/>
            <person name="Smith H.O."/>
            <person name="Woese C.R."/>
            <person name="Venter J.C."/>
        </authorList>
    </citation>
    <scope>NUCLEOTIDE SEQUENCE [LARGE SCALE GENOMIC DNA]</scope>
    <source>
        <strain>ATCC 43067 / DSM 2661 / JAL-1 / JCM 10045 / NBRC 100440</strain>
    </source>
</reference>
<reference key="2">
    <citation type="journal article" date="2004" name="J. Biol. Chem.">
        <title>A fully recombinant system for activator-dependent archaeal transcription.</title>
        <authorList>
            <person name="Ouhammouch M."/>
            <person name="Werner F."/>
            <person name="Weinzierl R.O."/>
            <person name="Geiduschek E.P."/>
        </authorList>
    </citation>
    <scope>FUNCTION</scope>
    <scope>SUBUNIT</scope>
</reference>
<reference key="3">
    <citation type="journal article" date="2005" name="Mol. Cell. Biol.">
        <title>Direct modulation of RNA polymerase core functions by basal transcription factors.</title>
        <authorList>
            <person name="Werner F."/>
            <person name="Weinzierl R.O."/>
        </authorList>
    </citation>
    <scope>FUNCTION</scope>
    <scope>INTERACTION WITH TBP AND RNA POLYMERASE</scope>
</reference>
<comment type="function">
    <text evidence="2 3">Transcription factor that plays a role in the activation of archaeal genes transcribed by RNA polymerase. Facilitates transcription initiation by enhancing TATA-box recognition by TATA-box-binding protein (Tbp), and transcription factor B (Tfb) and RNA polymerase recruitment. Not absolutely required for transcription in vitro, but particularly important in cases where Tbp or Tfb function is not optimal. It dynamically alters the nucleic acid-binding properties of RNA polymerases by stabilizing the initiation complex and destabilizing elongation complexes. Seems to translocate with the RNA polymerase following initiation and acts by binding to the non template strand of the transcription bubble in elongation complexes.</text>
</comment>
<comment type="subunit">
    <text evidence="1">Monomer (By similarity). Interaction with RNA polymerase subunits RpoF and RpoE is necessary for Tfe stimulatory transcription activity. Able to interact with RNA polymerase in the absence of Tbp or DNA promoter. Interacts both with the preinitiation and elongation complexes (By similarity).</text>
</comment>
<comment type="domain">
    <text evidence="1">The winged helix domain is involved in binding to DNA in the preinitiation complex.</text>
</comment>
<comment type="similarity">
    <text evidence="4">Belongs to the TFE family.</text>
</comment>
<comment type="sequence caution" evidence="4">
    <conflict type="erroneous initiation">
        <sequence resource="EMBL-CDS" id="AAB98767"/>
    </conflict>
</comment>
<gene>
    <name type="primary">tfe</name>
    <name type="ordered locus">MJ0777</name>
</gene>
<proteinExistence type="evidence at protein level"/>